<gene>
    <name evidence="1" type="primary">mdh</name>
    <name type="ordered locus">Shew_0867</name>
</gene>
<comment type="function">
    <text evidence="1">Catalyzes the reversible oxidation of malate to oxaloacetate.</text>
</comment>
<comment type="catalytic activity">
    <reaction evidence="1">
        <text>(S)-malate + NAD(+) = oxaloacetate + NADH + H(+)</text>
        <dbReference type="Rhea" id="RHEA:21432"/>
        <dbReference type="ChEBI" id="CHEBI:15378"/>
        <dbReference type="ChEBI" id="CHEBI:15589"/>
        <dbReference type="ChEBI" id="CHEBI:16452"/>
        <dbReference type="ChEBI" id="CHEBI:57540"/>
        <dbReference type="ChEBI" id="CHEBI:57945"/>
        <dbReference type="EC" id="1.1.1.37"/>
    </reaction>
</comment>
<comment type="subunit">
    <text evidence="1">Homodimer.</text>
</comment>
<comment type="similarity">
    <text evidence="1">Belongs to the LDH/MDH superfamily. MDH type 1 family.</text>
</comment>
<protein>
    <recommendedName>
        <fullName evidence="1">Malate dehydrogenase</fullName>
        <ecNumber evidence="1">1.1.1.37</ecNumber>
    </recommendedName>
</protein>
<name>MDH_SHELP</name>
<dbReference type="EC" id="1.1.1.37" evidence="1"/>
<dbReference type="EMBL" id="CP000606">
    <property type="protein sequence ID" value="ABO22739.1"/>
    <property type="molecule type" value="Genomic_DNA"/>
</dbReference>
<dbReference type="RefSeq" id="WP_011864673.1">
    <property type="nucleotide sequence ID" value="NC_009092.1"/>
</dbReference>
<dbReference type="SMR" id="A3QB91"/>
<dbReference type="STRING" id="323850.Shew_0867"/>
<dbReference type="KEGG" id="slo:Shew_0867"/>
<dbReference type="eggNOG" id="COG0039">
    <property type="taxonomic scope" value="Bacteria"/>
</dbReference>
<dbReference type="HOGENOM" id="CLU_047181_1_0_6"/>
<dbReference type="OrthoDB" id="9802969at2"/>
<dbReference type="Proteomes" id="UP000001558">
    <property type="component" value="Chromosome"/>
</dbReference>
<dbReference type="GO" id="GO:0005737">
    <property type="term" value="C:cytoplasm"/>
    <property type="evidence" value="ECO:0007669"/>
    <property type="project" value="TreeGrafter"/>
</dbReference>
<dbReference type="GO" id="GO:0030060">
    <property type="term" value="F:L-malate dehydrogenase (NAD+) activity"/>
    <property type="evidence" value="ECO:0007669"/>
    <property type="project" value="UniProtKB-UniRule"/>
</dbReference>
<dbReference type="GO" id="GO:0006108">
    <property type="term" value="P:malate metabolic process"/>
    <property type="evidence" value="ECO:0007669"/>
    <property type="project" value="InterPro"/>
</dbReference>
<dbReference type="GO" id="GO:0006099">
    <property type="term" value="P:tricarboxylic acid cycle"/>
    <property type="evidence" value="ECO:0007669"/>
    <property type="project" value="UniProtKB-UniRule"/>
</dbReference>
<dbReference type="CDD" id="cd01337">
    <property type="entry name" value="MDH_glyoxysomal_mitochondrial"/>
    <property type="match status" value="1"/>
</dbReference>
<dbReference type="FunFam" id="3.40.50.720:FF:000017">
    <property type="entry name" value="Malate dehydrogenase"/>
    <property type="match status" value="1"/>
</dbReference>
<dbReference type="FunFam" id="3.90.110.10:FF:000001">
    <property type="entry name" value="Malate dehydrogenase"/>
    <property type="match status" value="1"/>
</dbReference>
<dbReference type="Gene3D" id="3.90.110.10">
    <property type="entry name" value="Lactate dehydrogenase/glycoside hydrolase, family 4, C-terminal"/>
    <property type="match status" value="1"/>
</dbReference>
<dbReference type="Gene3D" id="3.40.50.720">
    <property type="entry name" value="NAD(P)-binding Rossmann-like Domain"/>
    <property type="match status" value="1"/>
</dbReference>
<dbReference type="HAMAP" id="MF_01516">
    <property type="entry name" value="Malate_dehydrog_1"/>
    <property type="match status" value="1"/>
</dbReference>
<dbReference type="InterPro" id="IPR001557">
    <property type="entry name" value="L-lactate/malate_DH"/>
</dbReference>
<dbReference type="InterPro" id="IPR022383">
    <property type="entry name" value="Lactate/malate_DH_C"/>
</dbReference>
<dbReference type="InterPro" id="IPR001236">
    <property type="entry name" value="Lactate/malate_DH_N"/>
</dbReference>
<dbReference type="InterPro" id="IPR015955">
    <property type="entry name" value="Lactate_DH/Glyco_Ohase_4_C"/>
</dbReference>
<dbReference type="InterPro" id="IPR001252">
    <property type="entry name" value="Malate_DH_AS"/>
</dbReference>
<dbReference type="InterPro" id="IPR010097">
    <property type="entry name" value="Malate_DH_type1"/>
</dbReference>
<dbReference type="InterPro" id="IPR023958">
    <property type="entry name" value="Malate_DH_type1_bac"/>
</dbReference>
<dbReference type="InterPro" id="IPR036291">
    <property type="entry name" value="NAD(P)-bd_dom_sf"/>
</dbReference>
<dbReference type="NCBIfam" id="TIGR01772">
    <property type="entry name" value="MDH_euk_gproteo"/>
    <property type="match status" value="1"/>
</dbReference>
<dbReference type="PANTHER" id="PTHR11540">
    <property type="entry name" value="MALATE AND LACTATE DEHYDROGENASE"/>
    <property type="match status" value="1"/>
</dbReference>
<dbReference type="PANTHER" id="PTHR11540:SF16">
    <property type="entry name" value="MALATE DEHYDROGENASE, MITOCHONDRIAL"/>
    <property type="match status" value="1"/>
</dbReference>
<dbReference type="Pfam" id="PF02866">
    <property type="entry name" value="Ldh_1_C"/>
    <property type="match status" value="1"/>
</dbReference>
<dbReference type="Pfam" id="PF00056">
    <property type="entry name" value="Ldh_1_N"/>
    <property type="match status" value="1"/>
</dbReference>
<dbReference type="PIRSF" id="PIRSF000102">
    <property type="entry name" value="Lac_mal_DH"/>
    <property type="match status" value="1"/>
</dbReference>
<dbReference type="SUPFAM" id="SSF56327">
    <property type="entry name" value="LDH C-terminal domain-like"/>
    <property type="match status" value="1"/>
</dbReference>
<dbReference type="SUPFAM" id="SSF51735">
    <property type="entry name" value="NAD(P)-binding Rossmann-fold domains"/>
    <property type="match status" value="1"/>
</dbReference>
<dbReference type="PROSITE" id="PS00068">
    <property type="entry name" value="MDH"/>
    <property type="match status" value="1"/>
</dbReference>
<keyword id="KW-0520">NAD</keyword>
<keyword id="KW-0560">Oxidoreductase</keyword>
<keyword id="KW-1185">Reference proteome</keyword>
<keyword id="KW-0816">Tricarboxylic acid cycle</keyword>
<reference key="1">
    <citation type="submission" date="2007-03" db="EMBL/GenBank/DDBJ databases">
        <title>Complete sequence of Shewanella loihica PV-4.</title>
        <authorList>
            <consortium name="US DOE Joint Genome Institute"/>
            <person name="Copeland A."/>
            <person name="Lucas S."/>
            <person name="Lapidus A."/>
            <person name="Barry K."/>
            <person name="Detter J.C."/>
            <person name="Glavina del Rio T."/>
            <person name="Hammon N."/>
            <person name="Israni S."/>
            <person name="Dalin E."/>
            <person name="Tice H."/>
            <person name="Pitluck S."/>
            <person name="Chain P."/>
            <person name="Malfatti S."/>
            <person name="Shin M."/>
            <person name="Vergez L."/>
            <person name="Schmutz J."/>
            <person name="Larimer F."/>
            <person name="Land M."/>
            <person name="Hauser L."/>
            <person name="Kyrpides N."/>
            <person name="Mikhailova N."/>
            <person name="Romine M.F."/>
            <person name="Serres G."/>
            <person name="Fredrickson J."/>
            <person name="Tiedje J."/>
            <person name="Richardson P."/>
        </authorList>
    </citation>
    <scope>NUCLEOTIDE SEQUENCE [LARGE SCALE GENOMIC DNA]</scope>
    <source>
        <strain>ATCC BAA-1088 / PV-4</strain>
    </source>
</reference>
<proteinExistence type="inferred from homology"/>
<evidence type="ECO:0000255" key="1">
    <source>
        <dbReference type="HAMAP-Rule" id="MF_01516"/>
    </source>
</evidence>
<sequence>MKVAVLGAAGGIGQALALLLKTQLPAGSKLSLYDIAPVTPGVAVDLSHIPTAVEVKGFAGEDPTPALEGADVVLISAGVARKPGMDRSDLFNINAGIVRNLVEKCAATCPKALIGIITNPVNTTVAIAAEVLKAAGVYDKNRLFGVTTLDVIRSETFVAEAKGLNVADVKVNVIGGHSGVTILPLLSQIEGVSFSDEEVAALTTRIQNAGTEVVEAKAGGGSATLSMGQAACRFGLSLVRGLQGEANVVECAYVDGGSEHADFFAQPVLLGKNGIEQVLAYGEVSEFEANARDAMLDTLKADITLGVDFVK</sequence>
<organism>
    <name type="scientific">Shewanella loihica (strain ATCC BAA-1088 / PV-4)</name>
    <dbReference type="NCBI Taxonomy" id="323850"/>
    <lineage>
        <taxon>Bacteria</taxon>
        <taxon>Pseudomonadati</taxon>
        <taxon>Pseudomonadota</taxon>
        <taxon>Gammaproteobacteria</taxon>
        <taxon>Alteromonadales</taxon>
        <taxon>Shewanellaceae</taxon>
        <taxon>Shewanella</taxon>
    </lineage>
</organism>
<accession>A3QB91</accession>
<feature type="chain" id="PRO_0000294303" description="Malate dehydrogenase">
    <location>
        <begin position="1"/>
        <end position="311"/>
    </location>
</feature>
<feature type="active site" description="Proton acceptor" evidence="1">
    <location>
        <position position="177"/>
    </location>
</feature>
<feature type="binding site" evidence="1">
    <location>
        <begin position="7"/>
        <end position="13"/>
    </location>
    <ligand>
        <name>NAD(+)</name>
        <dbReference type="ChEBI" id="CHEBI:57540"/>
    </ligand>
</feature>
<feature type="binding site" evidence="1">
    <location>
        <position position="34"/>
    </location>
    <ligand>
        <name>NAD(+)</name>
        <dbReference type="ChEBI" id="CHEBI:57540"/>
    </ligand>
</feature>
<feature type="binding site" evidence="1">
    <location>
        <position position="81"/>
    </location>
    <ligand>
        <name>substrate</name>
    </ligand>
</feature>
<feature type="binding site" evidence="1">
    <location>
        <position position="87"/>
    </location>
    <ligand>
        <name>substrate</name>
    </ligand>
</feature>
<feature type="binding site" evidence="1">
    <location>
        <position position="94"/>
    </location>
    <ligand>
        <name>NAD(+)</name>
        <dbReference type="ChEBI" id="CHEBI:57540"/>
    </ligand>
</feature>
<feature type="binding site" evidence="1">
    <location>
        <begin position="117"/>
        <end position="119"/>
    </location>
    <ligand>
        <name>NAD(+)</name>
        <dbReference type="ChEBI" id="CHEBI:57540"/>
    </ligand>
</feature>
<feature type="binding site" evidence="1">
    <location>
        <position position="119"/>
    </location>
    <ligand>
        <name>substrate</name>
    </ligand>
</feature>
<feature type="binding site" evidence="1">
    <location>
        <position position="153"/>
    </location>
    <ligand>
        <name>substrate</name>
    </ligand>
</feature>
<feature type="binding site" evidence="1">
    <location>
        <position position="227"/>
    </location>
    <ligand>
        <name>NAD(+)</name>
        <dbReference type="ChEBI" id="CHEBI:57540"/>
    </ligand>
</feature>